<comment type="catalytic activity">
    <reaction evidence="1">
        <text>L-glutamine + H2O = L-glutamate + NH4(+)</text>
        <dbReference type="Rhea" id="RHEA:15889"/>
        <dbReference type="ChEBI" id="CHEBI:15377"/>
        <dbReference type="ChEBI" id="CHEBI:28938"/>
        <dbReference type="ChEBI" id="CHEBI:29985"/>
        <dbReference type="ChEBI" id="CHEBI:58359"/>
        <dbReference type="EC" id="3.5.1.2"/>
    </reaction>
</comment>
<comment type="subunit">
    <text evidence="1">Homotetramer.</text>
</comment>
<comment type="similarity">
    <text evidence="1">Belongs to the glutaminase family.</text>
</comment>
<keyword id="KW-0378">Hydrolase</keyword>
<keyword id="KW-1185">Reference proteome</keyword>
<dbReference type="EC" id="3.5.1.2" evidence="1"/>
<dbReference type="EMBL" id="AM167904">
    <property type="protein sequence ID" value="CAJ50405.1"/>
    <property type="molecule type" value="Genomic_DNA"/>
</dbReference>
<dbReference type="RefSeq" id="WP_012418436.1">
    <property type="nucleotide sequence ID" value="NC_010645.1"/>
</dbReference>
<dbReference type="SMR" id="Q2KVV8"/>
<dbReference type="STRING" id="360910.BAV2794"/>
<dbReference type="KEGG" id="bav:BAV2794"/>
<dbReference type="eggNOG" id="COG2066">
    <property type="taxonomic scope" value="Bacteria"/>
</dbReference>
<dbReference type="HOGENOM" id="CLU_027932_1_0_4"/>
<dbReference type="OrthoDB" id="9788822at2"/>
<dbReference type="Proteomes" id="UP000001977">
    <property type="component" value="Chromosome"/>
</dbReference>
<dbReference type="GO" id="GO:0004359">
    <property type="term" value="F:glutaminase activity"/>
    <property type="evidence" value="ECO:0007669"/>
    <property type="project" value="UniProtKB-UniRule"/>
</dbReference>
<dbReference type="GO" id="GO:0006537">
    <property type="term" value="P:glutamate biosynthetic process"/>
    <property type="evidence" value="ECO:0007669"/>
    <property type="project" value="TreeGrafter"/>
</dbReference>
<dbReference type="GO" id="GO:0006543">
    <property type="term" value="P:glutamine catabolic process"/>
    <property type="evidence" value="ECO:0007669"/>
    <property type="project" value="TreeGrafter"/>
</dbReference>
<dbReference type="Gene3D" id="3.40.710.10">
    <property type="entry name" value="DD-peptidase/beta-lactamase superfamily"/>
    <property type="match status" value="1"/>
</dbReference>
<dbReference type="HAMAP" id="MF_00313">
    <property type="entry name" value="Glutaminase"/>
    <property type="match status" value="1"/>
</dbReference>
<dbReference type="InterPro" id="IPR012338">
    <property type="entry name" value="Beta-lactam/transpept-like"/>
</dbReference>
<dbReference type="InterPro" id="IPR015868">
    <property type="entry name" value="Glutaminase"/>
</dbReference>
<dbReference type="NCBIfam" id="TIGR03814">
    <property type="entry name" value="Gln_ase"/>
    <property type="match status" value="1"/>
</dbReference>
<dbReference type="NCBIfam" id="NF009020">
    <property type="entry name" value="PRK12356.1"/>
    <property type="match status" value="1"/>
</dbReference>
<dbReference type="PANTHER" id="PTHR12544">
    <property type="entry name" value="GLUTAMINASE"/>
    <property type="match status" value="1"/>
</dbReference>
<dbReference type="PANTHER" id="PTHR12544:SF48">
    <property type="entry name" value="GLUTAMINASE 1"/>
    <property type="match status" value="1"/>
</dbReference>
<dbReference type="Pfam" id="PF04960">
    <property type="entry name" value="Glutaminase"/>
    <property type="match status" value="1"/>
</dbReference>
<dbReference type="SUPFAM" id="SSF56601">
    <property type="entry name" value="beta-lactamase/transpeptidase-like"/>
    <property type="match status" value="1"/>
</dbReference>
<feature type="chain" id="PRO_1000048326" description="Glutaminase">
    <location>
        <begin position="1"/>
        <end position="312"/>
    </location>
</feature>
<feature type="binding site" evidence="1">
    <location>
        <position position="67"/>
    </location>
    <ligand>
        <name>substrate</name>
    </ligand>
</feature>
<feature type="binding site" evidence="1">
    <location>
        <position position="118"/>
    </location>
    <ligand>
        <name>substrate</name>
    </ligand>
</feature>
<feature type="binding site" evidence="1">
    <location>
        <position position="162"/>
    </location>
    <ligand>
        <name>substrate</name>
    </ligand>
</feature>
<feature type="binding site" evidence="1">
    <location>
        <position position="169"/>
    </location>
    <ligand>
        <name>substrate</name>
    </ligand>
</feature>
<feature type="binding site" evidence="1">
    <location>
        <position position="193"/>
    </location>
    <ligand>
        <name>substrate</name>
    </ligand>
</feature>
<feature type="binding site" evidence="1">
    <location>
        <position position="245"/>
    </location>
    <ligand>
        <name>substrate</name>
    </ligand>
</feature>
<feature type="binding site" evidence="1">
    <location>
        <position position="263"/>
    </location>
    <ligand>
        <name>substrate</name>
    </ligand>
</feature>
<accession>Q2KVV8</accession>
<protein>
    <recommendedName>
        <fullName evidence="1">Glutaminase</fullName>
        <ecNumber evidence="1">3.5.1.2</ecNumber>
    </recommendedName>
</protein>
<sequence>MKIDVSRLSAAVNDAHARHAQAPGGANASYIPYLAKVPSHLAGVAAVTVDGDQVVAGDADYAFAIESISKVCSLVQALEDHGPDAVREKIGADPTGLPFNSVMALALHDGKPLSPLVNAGAIATVSFLKAANAEERWKKILAMQSALAGADIALSDEVNQSEQTTNFHNRAIAWLLYSASTMYSDPMEACEVYTRQCSTLFTARHLATMAATLAAKGRNPLTGKQVLKPEHVPSVLAEMMMEGLYERSGDWAYMVGLPGKSGVGGGIMAVVPGVMGLAAFSPPLDPAGNSVRGQLMVADVARTLGLNLFDRA</sequence>
<reference key="1">
    <citation type="journal article" date="2006" name="J. Bacteriol.">
        <title>Comparison of the genome sequence of the poultry pathogen Bordetella avium with those of B. bronchiseptica, B. pertussis, and B. parapertussis reveals extensive diversity in surface structures associated with host interaction.</title>
        <authorList>
            <person name="Sebaihia M."/>
            <person name="Preston A."/>
            <person name="Maskell D.J."/>
            <person name="Kuzmiak H."/>
            <person name="Connell T.D."/>
            <person name="King N.D."/>
            <person name="Orndorff P.E."/>
            <person name="Miyamoto D.M."/>
            <person name="Thomson N.R."/>
            <person name="Harris D."/>
            <person name="Goble A."/>
            <person name="Lord A."/>
            <person name="Murphy L."/>
            <person name="Quail M.A."/>
            <person name="Rutter S."/>
            <person name="Squares R."/>
            <person name="Squares S."/>
            <person name="Woodward J."/>
            <person name="Parkhill J."/>
            <person name="Temple L.M."/>
        </authorList>
    </citation>
    <scope>NUCLEOTIDE SEQUENCE [LARGE SCALE GENOMIC DNA]</scope>
    <source>
        <strain>197N</strain>
    </source>
</reference>
<name>GLSA_BORA1</name>
<gene>
    <name evidence="1" type="primary">glsA</name>
    <name type="ordered locus">BAV2794</name>
</gene>
<evidence type="ECO:0000255" key="1">
    <source>
        <dbReference type="HAMAP-Rule" id="MF_00313"/>
    </source>
</evidence>
<organism>
    <name type="scientific">Bordetella avium (strain 197N)</name>
    <dbReference type="NCBI Taxonomy" id="360910"/>
    <lineage>
        <taxon>Bacteria</taxon>
        <taxon>Pseudomonadati</taxon>
        <taxon>Pseudomonadota</taxon>
        <taxon>Betaproteobacteria</taxon>
        <taxon>Burkholderiales</taxon>
        <taxon>Alcaligenaceae</taxon>
        <taxon>Bordetella</taxon>
    </lineage>
</organism>
<proteinExistence type="inferred from homology"/>